<keyword id="KW-0067">ATP-binding</keyword>
<keyword id="KW-0547">Nucleotide-binding</keyword>
<keyword id="KW-0548">Nucleotidyltransferase</keyword>
<keyword id="KW-0808">Transferase</keyword>
<comment type="function">
    <text evidence="1">With CysN forms the ATP sulfurylase (ATPS) that catalyzes the adenylation of sulfate producing adenosine 5'-phosphosulfate (APS) and diphosphate, the first enzymatic step in sulfur assimilation pathway. APS synthesis involves the formation of a high-energy phosphoric-sulfuric acid anhydride bond driven by GTP hydrolysis by CysN coupled to ATP hydrolysis by CysD.</text>
</comment>
<comment type="catalytic activity">
    <reaction evidence="1">
        <text>sulfate + ATP + H(+) = adenosine 5'-phosphosulfate + diphosphate</text>
        <dbReference type="Rhea" id="RHEA:18133"/>
        <dbReference type="ChEBI" id="CHEBI:15378"/>
        <dbReference type="ChEBI" id="CHEBI:16189"/>
        <dbReference type="ChEBI" id="CHEBI:30616"/>
        <dbReference type="ChEBI" id="CHEBI:33019"/>
        <dbReference type="ChEBI" id="CHEBI:58243"/>
        <dbReference type="EC" id="2.7.7.4"/>
    </reaction>
</comment>
<comment type="pathway">
    <text evidence="1">Sulfur metabolism; hydrogen sulfide biosynthesis; sulfite from sulfate: step 1/3.</text>
</comment>
<comment type="subunit">
    <text evidence="1">Heterodimer composed of CysD, the smaller subunit, and CysN.</text>
</comment>
<comment type="similarity">
    <text evidence="1">Belongs to the PAPS reductase family. CysD subfamily.</text>
</comment>
<protein>
    <recommendedName>
        <fullName evidence="1">Sulfate adenylyltransferase subunit 2</fullName>
        <ecNumber evidence="1">2.7.7.4</ecNumber>
    </recommendedName>
    <alternativeName>
        <fullName evidence="1">ATP-sulfurylase small subunit</fullName>
    </alternativeName>
    <alternativeName>
        <fullName evidence="1">Sulfate adenylate transferase</fullName>
        <shortName evidence="1">SAT</shortName>
    </alternativeName>
</protein>
<feature type="chain" id="PRO_1000092221" description="Sulfate adenylyltransferase subunit 2">
    <location>
        <begin position="1"/>
        <end position="302"/>
    </location>
</feature>
<organism>
    <name type="scientific">Salmonella gallinarum (strain 287/91 / NCTC 13346)</name>
    <dbReference type="NCBI Taxonomy" id="550538"/>
    <lineage>
        <taxon>Bacteria</taxon>
        <taxon>Pseudomonadati</taxon>
        <taxon>Pseudomonadota</taxon>
        <taxon>Gammaproteobacteria</taxon>
        <taxon>Enterobacterales</taxon>
        <taxon>Enterobacteriaceae</taxon>
        <taxon>Salmonella</taxon>
    </lineage>
</organism>
<evidence type="ECO:0000255" key="1">
    <source>
        <dbReference type="HAMAP-Rule" id="MF_00064"/>
    </source>
</evidence>
<name>CYSD_SALG2</name>
<dbReference type="EC" id="2.7.7.4" evidence="1"/>
<dbReference type="EMBL" id="AM933173">
    <property type="protein sequence ID" value="CAR38646.1"/>
    <property type="molecule type" value="Genomic_DNA"/>
</dbReference>
<dbReference type="RefSeq" id="WP_000372384.1">
    <property type="nucleotide sequence ID" value="NC_011274.1"/>
</dbReference>
<dbReference type="SMR" id="B5RDQ8"/>
<dbReference type="KEGG" id="seg:SG2838"/>
<dbReference type="HOGENOM" id="CLU_043026_0_0_6"/>
<dbReference type="UniPathway" id="UPA00140">
    <property type="reaction ID" value="UER00204"/>
</dbReference>
<dbReference type="Proteomes" id="UP000008321">
    <property type="component" value="Chromosome"/>
</dbReference>
<dbReference type="GO" id="GO:0005524">
    <property type="term" value="F:ATP binding"/>
    <property type="evidence" value="ECO:0007669"/>
    <property type="project" value="UniProtKB-KW"/>
</dbReference>
<dbReference type="GO" id="GO:0004781">
    <property type="term" value="F:sulfate adenylyltransferase (ATP) activity"/>
    <property type="evidence" value="ECO:0007669"/>
    <property type="project" value="UniProtKB-UniRule"/>
</dbReference>
<dbReference type="GO" id="GO:0070814">
    <property type="term" value="P:hydrogen sulfide biosynthetic process"/>
    <property type="evidence" value="ECO:0007669"/>
    <property type="project" value="UniProtKB-UniRule"/>
</dbReference>
<dbReference type="GO" id="GO:0000103">
    <property type="term" value="P:sulfate assimilation"/>
    <property type="evidence" value="ECO:0007669"/>
    <property type="project" value="UniProtKB-UniRule"/>
</dbReference>
<dbReference type="CDD" id="cd23946">
    <property type="entry name" value="Sulfate_adenylyltransferase_2"/>
    <property type="match status" value="1"/>
</dbReference>
<dbReference type="FunFam" id="3.40.50.620:FF:000002">
    <property type="entry name" value="Sulfate adenylyltransferase subunit 2"/>
    <property type="match status" value="1"/>
</dbReference>
<dbReference type="Gene3D" id="3.40.50.620">
    <property type="entry name" value="HUPs"/>
    <property type="match status" value="1"/>
</dbReference>
<dbReference type="HAMAP" id="MF_00064">
    <property type="entry name" value="Sulf_adenylyltr_sub2"/>
    <property type="match status" value="1"/>
</dbReference>
<dbReference type="InterPro" id="IPR002500">
    <property type="entry name" value="PAPS_reduct_dom"/>
</dbReference>
<dbReference type="InterPro" id="IPR014729">
    <property type="entry name" value="Rossmann-like_a/b/a_fold"/>
</dbReference>
<dbReference type="InterPro" id="IPR011784">
    <property type="entry name" value="SO4_adenylTrfase_ssu"/>
</dbReference>
<dbReference type="InterPro" id="IPR050128">
    <property type="entry name" value="Sulfate_adenylyltrnsfr_sub2"/>
</dbReference>
<dbReference type="NCBIfam" id="TIGR02039">
    <property type="entry name" value="CysD"/>
    <property type="match status" value="1"/>
</dbReference>
<dbReference type="NCBIfam" id="NF003587">
    <property type="entry name" value="PRK05253.1"/>
    <property type="match status" value="1"/>
</dbReference>
<dbReference type="NCBIfam" id="NF009214">
    <property type="entry name" value="PRK12563.1"/>
    <property type="match status" value="1"/>
</dbReference>
<dbReference type="PANTHER" id="PTHR43196">
    <property type="entry name" value="SULFATE ADENYLYLTRANSFERASE SUBUNIT 2"/>
    <property type="match status" value="1"/>
</dbReference>
<dbReference type="PANTHER" id="PTHR43196:SF1">
    <property type="entry name" value="SULFATE ADENYLYLTRANSFERASE SUBUNIT 2"/>
    <property type="match status" value="1"/>
</dbReference>
<dbReference type="Pfam" id="PF01507">
    <property type="entry name" value="PAPS_reduct"/>
    <property type="match status" value="1"/>
</dbReference>
<dbReference type="PIRSF" id="PIRSF002936">
    <property type="entry name" value="CysDAde_trans"/>
    <property type="match status" value="1"/>
</dbReference>
<dbReference type="SUPFAM" id="SSF52402">
    <property type="entry name" value="Adenine nucleotide alpha hydrolases-like"/>
    <property type="match status" value="1"/>
</dbReference>
<reference key="1">
    <citation type="journal article" date="2008" name="Genome Res.">
        <title>Comparative genome analysis of Salmonella enteritidis PT4 and Salmonella gallinarum 287/91 provides insights into evolutionary and host adaptation pathways.</title>
        <authorList>
            <person name="Thomson N.R."/>
            <person name="Clayton D.J."/>
            <person name="Windhorst D."/>
            <person name="Vernikos G."/>
            <person name="Davidson S."/>
            <person name="Churcher C."/>
            <person name="Quail M.A."/>
            <person name="Stevens M."/>
            <person name="Jones M.A."/>
            <person name="Watson M."/>
            <person name="Barron A."/>
            <person name="Layton A."/>
            <person name="Pickard D."/>
            <person name="Kingsley R.A."/>
            <person name="Bignell A."/>
            <person name="Clark L."/>
            <person name="Harris B."/>
            <person name="Ormond D."/>
            <person name="Abdellah Z."/>
            <person name="Brooks K."/>
            <person name="Cherevach I."/>
            <person name="Chillingworth T."/>
            <person name="Woodward J."/>
            <person name="Norberczak H."/>
            <person name="Lord A."/>
            <person name="Arrowsmith C."/>
            <person name="Jagels K."/>
            <person name="Moule S."/>
            <person name="Mungall K."/>
            <person name="Saunders M."/>
            <person name="Whitehead S."/>
            <person name="Chabalgoity J.A."/>
            <person name="Maskell D."/>
            <person name="Humphreys T."/>
            <person name="Roberts M."/>
            <person name="Barrow P.A."/>
            <person name="Dougan G."/>
            <person name="Parkhill J."/>
        </authorList>
    </citation>
    <scope>NUCLEOTIDE SEQUENCE [LARGE SCALE GENOMIC DNA]</scope>
    <source>
        <strain>287/91 / NCTC 13346</strain>
    </source>
</reference>
<sequence>MDQKRLTHLRQLEAESIHIIREVAAEFANPVMLYSIGKDSSVMLHLARKAFYPGTLPFPLLHVDTGWKFREMYAFRDRTANAYGCELLVHKNPEGVAMGINPFVHGSAKHTDIMKTEGLKQALNKYGFDAAFGGARRDEEKSRAKERIYSFRDRFHRWDPKNQRPELWRNYNGQINKGESIRVFPLSNWTEQDIWQYIWLENIDIVPLYLAAERPVLERDGMLMMVDDDRIDLQPGEVIKKRMVRFRTLGCWPLTGAVESHAQTLPEIIEEMLVSTTSERQGRMIDRDQAGSMELKKRQGYF</sequence>
<proteinExistence type="inferred from homology"/>
<accession>B5RDQ8</accession>
<gene>
    <name evidence="1" type="primary">cysD</name>
    <name type="ordered locus">SG2838</name>
</gene>